<reference key="1">
    <citation type="journal article" date="2002" name="Genome Res.">
        <title>The genome of Methanosarcina acetivorans reveals extensive metabolic and physiological diversity.</title>
        <authorList>
            <person name="Galagan J.E."/>
            <person name="Nusbaum C."/>
            <person name="Roy A."/>
            <person name="Endrizzi M.G."/>
            <person name="Macdonald P."/>
            <person name="FitzHugh W."/>
            <person name="Calvo S."/>
            <person name="Engels R."/>
            <person name="Smirnov S."/>
            <person name="Atnoor D."/>
            <person name="Brown A."/>
            <person name="Allen N."/>
            <person name="Naylor J."/>
            <person name="Stange-Thomann N."/>
            <person name="DeArellano K."/>
            <person name="Johnson R."/>
            <person name="Linton L."/>
            <person name="McEwan P."/>
            <person name="McKernan K."/>
            <person name="Talamas J."/>
            <person name="Tirrell A."/>
            <person name="Ye W."/>
            <person name="Zimmer A."/>
            <person name="Barber R.D."/>
            <person name="Cann I."/>
            <person name="Graham D.E."/>
            <person name="Grahame D.A."/>
            <person name="Guss A.M."/>
            <person name="Hedderich R."/>
            <person name="Ingram-Smith C."/>
            <person name="Kuettner H.C."/>
            <person name="Krzycki J.A."/>
            <person name="Leigh J.A."/>
            <person name="Li W."/>
            <person name="Liu J."/>
            <person name="Mukhopadhyay B."/>
            <person name="Reeve J.N."/>
            <person name="Smith K."/>
            <person name="Springer T.A."/>
            <person name="Umayam L.A."/>
            <person name="White O."/>
            <person name="White R.H."/>
            <person name="de Macario E.C."/>
            <person name="Ferry J.G."/>
            <person name="Jarrell K.F."/>
            <person name="Jing H."/>
            <person name="Macario A.J.L."/>
            <person name="Paulsen I.T."/>
            <person name="Pritchett M."/>
            <person name="Sowers K.R."/>
            <person name="Swanson R.V."/>
            <person name="Zinder S.H."/>
            <person name="Lander E."/>
            <person name="Metcalf W.W."/>
            <person name="Birren B."/>
        </authorList>
    </citation>
    <scope>NUCLEOTIDE SEQUENCE [LARGE SCALE GENOMIC DNA]</scope>
    <source>
        <strain>ATCC 35395 / DSM 2834 / JCM 12185 / C2A</strain>
    </source>
</reference>
<feature type="chain" id="PRO_0000145718" description="Glyceraldehyde-3-phosphate dehydrogenase 1">
    <location>
        <begin position="1"/>
        <end position="335"/>
    </location>
</feature>
<feature type="active site" description="Nucleophile" evidence="1">
    <location>
        <position position="141"/>
    </location>
</feature>
<feature type="binding site" evidence="1">
    <location>
        <begin position="13"/>
        <end position="14"/>
    </location>
    <ligand>
        <name>NAD(+)</name>
        <dbReference type="ChEBI" id="CHEBI:57540"/>
    </ligand>
</feature>
<feature type="binding site" evidence="1">
    <location>
        <position position="111"/>
    </location>
    <ligand>
        <name>NAD(+)</name>
        <dbReference type="ChEBI" id="CHEBI:57540"/>
    </ligand>
</feature>
<feature type="binding site" evidence="1">
    <location>
        <begin position="140"/>
        <end position="142"/>
    </location>
    <ligand>
        <name>D-glyceraldehyde 3-phosphate</name>
        <dbReference type="ChEBI" id="CHEBI:59776"/>
    </ligand>
</feature>
<feature type="binding site" evidence="1">
    <location>
        <position position="169"/>
    </location>
    <ligand>
        <name>NAD(+)</name>
        <dbReference type="ChEBI" id="CHEBI:57540"/>
    </ligand>
</feature>
<feature type="binding site" evidence="1">
    <location>
        <position position="171"/>
    </location>
    <ligand>
        <name>D-glyceraldehyde 3-phosphate</name>
        <dbReference type="ChEBI" id="CHEBI:59776"/>
    </ligand>
</feature>
<feature type="binding site" evidence="1">
    <location>
        <begin position="195"/>
        <end position="196"/>
    </location>
    <ligand>
        <name>D-glyceraldehyde 3-phosphate</name>
        <dbReference type="ChEBI" id="CHEBI:59776"/>
    </ligand>
</feature>
<feature type="binding site" evidence="1">
    <location>
        <position position="300"/>
    </location>
    <ligand>
        <name>NAD(+)</name>
        <dbReference type="ChEBI" id="CHEBI:57540"/>
    </ligand>
</feature>
<evidence type="ECO:0000250" key="1"/>
<evidence type="ECO:0000305" key="2"/>
<keyword id="KW-0963">Cytoplasm</keyword>
<keyword id="KW-0324">Glycolysis</keyword>
<keyword id="KW-0520">NAD</keyword>
<keyword id="KW-0521">NADP</keyword>
<keyword id="KW-0560">Oxidoreductase</keyword>
<keyword id="KW-1185">Reference proteome</keyword>
<gene>
    <name type="primary">gapA</name>
    <name type="ordered locus">MA_1018</name>
</gene>
<organism>
    <name type="scientific">Methanosarcina acetivorans (strain ATCC 35395 / DSM 2834 / JCM 12185 / C2A)</name>
    <dbReference type="NCBI Taxonomy" id="188937"/>
    <lineage>
        <taxon>Archaea</taxon>
        <taxon>Methanobacteriati</taxon>
        <taxon>Methanobacteriota</taxon>
        <taxon>Stenosarchaea group</taxon>
        <taxon>Methanomicrobia</taxon>
        <taxon>Methanosarcinales</taxon>
        <taxon>Methanosarcinaceae</taxon>
        <taxon>Methanosarcina</taxon>
    </lineage>
</organism>
<comment type="catalytic activity">
    <reaction>
        <text>D-glyceraldehyde 3-phosphate + phosphate + NADP(+) = (2R)-3-phospho-glyceroyl phosphate + NADPH + H(+)</text>
        <dbReference type="Rhea" id="RHEA:10296"/>
        <dbReference type="ChEBI" id="CHEBI:15378"/>
        <dbReference type="ChEBI" id="CHEBI:43474"/>
        <dbReference type="ChEBI" id="CHEBI:57604"/>
        <dbReference type="ChEBI" id="CHEBI:57783"/>
        <dbReference type="ChEBI" id="CHEBI:58349"/>
        <dbReference type="ChEBI" id="CHEBI:59776"/>
        <dbReference type="EC" id="1.2.1.59"/>
    </reaction>
</comment>
<comment type="catalytic activity">
    <reaction>
        <text>D-glyceraldehyde 3-phosphate + phosphate + NAD(+) = (2R)-3-phospho-glyceroyl phosphate + NADH + H(+)</text>
        <dbReference type="Rhea" id="RHEA:10300"/>
        <dbReference type="ChEBI" id="CHEBI:15378"/>
        <dbReference type="ChEBI" id="CHEBI:43474"/>
        <dbReference type="ChEBI" id="CHEBI:57540"/>
        <dbReference type="ChEBI" id="CHEBI:57604"/>
        <dbReference type="ChEBI" id="CHEBI:57945"/>
        <dbReference type="ChEBI" id="CHEBI:59776"/>
        <dbReference type="EC" id="1.2.1.59"/>
    </reaction>
</comment>
<comment type="pathway">
    <text>Carbohydrate degradation; glycolysis; pyruvate from D-glyceraldehyde 3-phosphate: step 1/5.</text>
</comment>
<comment type="subunit">
    <text evidence="1">Homotetramer.</text>
</comment>
<comment type="subcellular location">
    <subcellularLocation>
        <location evidence="1">Cytoplasm</location>
    </subcellularLocation>
</comment>
<comment type="similarity">
    <text evidence="2">Belongs to the glyceraldehyde-3-phosphate dehydrogenase family.</text>
</comment>
<dbReference type="EC" id="1.2.1.59"/>
<dbReference type="EMBL" id="AE010299">
    <property type="protein sequence ID" value="AAM04448.1"/>
    <property type="molecule type" value="Genomic_DNA"/>
</dbReference>
<dbReference type="RefSeq" id="WP_011021053.1">
    <property type="nucleotide sequence ID" value="NC_003552.1"/>
</dbReference>
<dbReference type="SMR" id="P58837"/>
<dbReference type="FunCoup" id="P58837">
    <property type="interactions" value="156"/>
</dbReference>
<dbReference type="STRING" id="188937.MA_1018"/>
<dbReference type="EnsemblBacteria" id="AAM04448">
    <property type="protein sequence ID" value="AAM04448"/>
    <property type="gene ID" value="MA_1018"/>
</dbReference>
<dbReference type="GeneID" id="1472908"/>
<dbReference type="KEGG" id="mac:MA_1018"/>
<dbReference type="HOGENOM" id="CLU_069533_0_0_2"/>
<dbReference type="InParanoid" id="P58837"/>
<dbReference type="OrthoDB" id="295712at2157"/>
<dbReference type="PhylomeDB" id="P58837"/>
<dbReference type="UniPathway" id="UPA00109">
    <property type="reaction ID" value="UER00184"/>
</dbReference>
<dbReference type="Proteomes" id="UP000002487">
    <property type="component" value="Chromosome"/>
</dbReference>
<dbReference type="GO" id="GO:0005737">
    <property type="term" value="C:cytoplasm"/>
    <property type="evidence" value="ECO:0007669"/>
    <property type="project" value="UniProtKB-SubCell"/>
</dbReference>
<dbReference type="GO" id="GO:0008839">
    <property type="term" value="F:4-hydroxy-tetrahydrodipicolinate reductase"/>
    <property type="evidence" value="ECO:0007669"/>
    <property type="project" value="InterPro"/>
</dbReference>
<dbReference type="GO" id="GO:0004365">
    <property type="term" value="F:glyceraldehyde-3-phosphate dehydrogenase (NAD+) (phosphorylating) activity"/>
    <property type="evidence" value="ECO:0007669"/>
    <property type="project" value="UniProtKB-UniRule"/>
</dbReference>
<dbReference type="GO" id="GO:0047100">
    <property type="term" value="F:glyceraldehyde-3-phosphate dehydrogenase (NADP+) (phosphorylating) activity"/>
    <property type="evidence" value="ECO:0007669"/>
    <property type="project" value="RHEA"/>
</dbReference>
<dbReference type="GO" id="GO:0051287">
    <property type="term" value="F:NAD binding"/>
    <property type="evidence" value="ECO:0007669"/>
    <property type="project" value="InterPro"/>
</dbReference>
<dbReference type="GO" id="GO:0050661">
    <property type="term" value="F:NADP binding"/>
    <property type="evidence" value="ECO:0007669"/>
    <property type="project" value="InterPro"/>
</dbReference>
<dbReference type="GO" id="GO:0006096">
    <property type="term" value="P:glycolytic process"/>
    <property type="evidence" value="ECO:0007669"/>
    <property type="project" value="UniProtKB-UniRule"/>
</dbReference>
<dbReference type="GO" id="GO:0009089">
    <property type="term" value="P:lysine biosynthetic process via diaminopimelate"/>
    <property type="evidence" value="ECO:0007669"/>
    <property type="project" value="InterPro"/>
</dbReference>
<dbReference type="CDD" id="cd18127">
    <property type="entry name" value="GAPDH_II_C"/>
    <property type="match status" value="1"/>
</dbReference>
<dbReference type="CDD" id="cd02278">
    <property type="entry name" value="GAPDH_II_N"/>
    <property type="match status" value="1"/>
</dbReference>
<dbReference type="Gene3D" id="3.30.360.10">
    <property type="entry name" value="Dihydrodipicolinate Reductase, domain 2"/>
    <property type="match status" value="1"/>
</dbReference>
<dbReference type="Gene3D" id="3.40.50.720">
    <property type="entry name" value="NAD(P)-binding Rossmann-like Domain"/>
    <property type="match status" value="1"/>
</dbReference>
<dbReference type="HAMAP" id="MF_00559">
    <property type="entry name" value="G3P_dehdrog_arch"/>
    <property type="match status" value="1"/>
</dbReference>
<dbReference type="InterPro" id="IPR000846">
    <property type="entry name" value="DapB_N"/>
</dbReference>
<dbReference type="InterPro" id="IPR020831">
    <property type="entry name" value="GlycerAld/Erythrose_P_DH"/>
</dbReference>
<dbReference type="InterPro" id="IPR020830">
    <property type="entry name" value="GlycerAld_3-P_DH_AS"/>
</dbReference>
<dbReference type="InterPro" id="IPR020829">
    <property type="entry name" value="GlycerAld_3-P_DH_cat"/>
</dbReference>
<dbReference type="InterPro" id="IPR020828">
    <property type="entry name" value="GlycerAld_3-P_DH_NAD(P)-bd"/>
</dbReference>
<dbReference type="InterPro" id="IPR006436">
    <property type="entry name" value="Glyceraldehyde-3-P_DH_2_arc"/>
</dbReference>
<dbReference type="InterPro" id="IPR036291">
    <property type="entry name" value="NAD(P)-bd_dom_sf"/>
</dbReference>
<dbReference type="NCBIfam" id="TIGR01546">
    <property type="entry name" value="GAPDH-II_archae"/>
    <property type="match status" value="1"/>
</dbReference>
<dbReference type="NCBIfam" id="NF003251">
    <property type="entry name" value="PRK04207.1"/>
    <property type="match status" value="1"/>
</dbReference>
<dbReference type="Pfam" id="PF01113">
    <property type="entry name" value="DapB_N"/>
    <property type="match status" value="1"/>
</dbReference>
<dbReference type="Pfam" id="PF02800">
    <property type="entry name" value="Gp_dh_C"/>
    <property type="match status" value="1"/>
</dbReference>
<dbReference type="PIRSF" id="PIRSF000149">
    <property type="entry name" value="GAP_DH"/>
    <property type="match status" value="1"/>
</dbReference>
<dbReference type="SMART" id="SM00846">
    <property type="entry name" value="Gp_dh_N"/>
    <property type="match status" value="1"/>
</dbReference>
<dbReference type="SUPFAM" id="SSF55347">
    <property type="entry name" value="Glyceraldehyde-3-phosphate dehydrogenase-like, C-terminal domain"/>
    <property type="match status" value="1"/>
</dbReference>
<dbReference type="SUPFAM" id="SSF51735">
    <property type="entry name" value="NAD(P)-binding Rossmann-fold domains"/>
    <property type="match status" value="1"/>
</dbReference>
<dbReference type="PROSITE" id="PS00071">
    <property type="entry name" value="GAPDH"/>
    <property type="match status" value="1"/>
</dbReference>
<sequence>MAKAKIAVNGYGTIGKRVADAVKAQDDMEVVGISKRTPNYEAAVAHQLGYDIYAPAENVGAFEKAGMPAAGSVEEMIEKADLVVDCTPGGVGEKNKPLYEKAGVKAIWQGGESHPIAGFSFNAVSNYEGALGRDLVRVVSCNTTGLCRTITPIDRELGVKKVRAILARRATDPNDIKKGPINAIVLHPVKLPSHHGPDVRSVIPHINITSAALLVPTTLMHLHTVNMEVDTDCTAEDIKKIFSSQSRIRFIGQGITSTAEIMEVARDIKRPRNDMWENCIWPESITVDEKEFYFFQAIHQESIVVPENVDAIRAMMELESDGAKSIEKTNKALGM</sequence>
<accession>P58837</accession>
<protein>
    <recommendedName>
        <fullName>Glyceraldehyde-3-phosphate dehydrogenase 1</fullName>
        <shortName>GAPDH 1</shortName>
        <ecNumber>1.2.1.59</ecNumber>
    </recommendedName>
    <alternativeName>
        <fullName>NAD(P)-dependent glyceraldehyde-3-phosphate dehydrogenase 1</fullName>
    </alternativeName>
</protein>
<name>G3P1_METAC</name>
<proteinExistence type="inferred from homology"/>